<comment type="function">
    <text evidence="1 2">Calcium-binding protein. Binds one calcium ion per monomer (By similarity). Can promote differentiation of adipocytes (in vitro) (By similarity). Overexpression in preadipocytes increases their proliferation, enhances adipogenesis and reduces insulin-stimulated glucose uptake (By similarity).</text>
</comment>
<comment type="subunit">
    <text evidence="1 2">Homodimer (By similarity). Interacts with TP53 (By similarity).</text>
</comment>
<comment type="subcellular location">
    <subcellularLocation>
        <location evidence="1">Nucleus</location>
        <location evidence="1">Nucleolus</location>
    </subcellularLocation>
    <subcellularLocation>
        <location evidence="1">Cytoplasm</location>
    </subcellularLocation>
    <text evidence="1">Primarily nucleolar. A high intracellular calcium level induces nucleolar exit and nucleocytoplasmic transport, whereas a low intracellular calcium level leads to nuclear translocation and accumulation within specific region of nucleoli.</text>
</comment>
<comment type="domain">
    <text evidence="1 2">S100A16 proteins, but not other S100 proteins, have only one functional Ca(2+) binding site per monomer. Upon Ca(2+) binding, undergoes conformational changes leading to the exposure of hydrophobic patches which could be implicated in the Ca(2+)-dependent nuclear export. Binds Zn(2+). Ca(2+) and Zn(2+) do not bind to the same site. Does not bind Cu(2+).</text>
</comment>
<comment type="similarity">
    <text evidence="4">Belongs to the S-100 family.</text>
</comment>
<dbReference type="EMBL" id="BC120103">
    <property type="protein sequence ID" value="AAI20104.1"/>
    <property type="molecule type" value="mRNA"/>
</dbReference>
<dbReference type="RefSeq" id="NP_001068686.1">
    <property type="nucleotide sequence ID" value="NM_001075218.1"/>
</dbReference>
<dbReference type="RefSeq" id="XP_005203713.1">
    <property type="nucleotide sequence ID" value="XM_005203656.4"/>
</dbReference>
<dbReference type="RefSeq" id="XP_005203714.1">
    <property type="nucleotide sequence ID" value="XM_005203657.4"/>
</dbReference>
<dbReference type="RefSeq" id="XP_005203715.1">
    <property type="nucleotide sequence ID" value="XM_005203658.5"/>
</dbReference>
<dbReference type="RefSeq" id="XP_024841871.1">
    <property type="nucleotide sequence ID" value="XM_024986103.1"/>
</dbReference>
<dbReference type="RefSeq" id="XP_059738503.1">
    <property type="nucleotide sequence ID" value="XM_059882520.1"/>
</dbReference>
<dbReference type="SMR" id="Q0VCM0"/>
<dbReference type="FunCoup" id="Q0VCM0">
    <property type="interactions" value="132"/>
</dbReference>
<dbReference type="STRING" id="9913.ENSBTAP00000018877"/>
<dbReference type="PaxDb" id="9913-ENSBTAP00000018877"/>
<dbReference type="PeptideAtlas" id="Q0VCM0"/>
<dbReference type="Ensembl" id="ENSBTAT00000018877.3">
    <property type="protein sequence ID" value="ENSBTAP00000018877.2"/>
    <property type="gene ID" value="ENSBTAG00000014204.4"/>
</dbReference>
<dbReference type="GeneID" id="505679"/>
<dbReference type="KEGG" id="bta:505679"/>
<dbReference type="CTD" id="140576"/>
<dbReference type="VEuPathDB" id="HostDB:ENSBTAG00000014204"/>
<dbReference type="VGNC" id="VGNC:34241">
    <property type="gene designation" value="S100A16"/>
</dbReference>
<dbReference type="eggNOG" id="ENOG502S6F9">
    <property type="taxonomic scope" value="Eukaryota"/>
</dbReference>
<dbReference type="GeneTree" id="ENSGT00390000000920"/>
<dbReference type="HOGENOM" id="CLU_138624_3_1_1"/>
<dbReference type="InParanoid" id="Q0VCM0"/>
<dbReference type="OMA" id="DCYTDLE"/>
<dbReference type="OrthoDB" id="8961427at2759"/>
<dbReference type="TreeFam" id="TF332727"/>
<dbReference type="Proteomes" id="UP000009136">
    <property type="component" value="Chromosome 3"/>
</dbReference>
<dbReference type="Bgee" id="ENSBTAG00000014204">
    <property type="expression patterns" value="Expressed in esophagus and 103 other cell types or tissues"/>
</dbReference>
<dbReference type="GO" id="GO:0005829">
    <property type="term" value="C:cytosol"/>
    <property type="evidence" value="ECO:0000250"/>
    <property type="project" value="UniProtKB"/>
</dbReference>
<dbReference type="GO" id="GO:0005615">
    <property type="term" value="C:extracellular space"/>
    <property type="evidence" value="ECO:0000318"/>
    <property type="project" value="GO_Central"/>
</dbReference>
<dbReference type="GO" id="GO:0005730">
    <property type="term" value="C:nucleolus"/>
    <property type="evidence" value="ECO:0000250"/>
    <property type="project" value="UniProtKB"/>
</dbReference>
<dbReference type="GO" id="GO:0005634">
    <property type="term" value="C:nucleus"/>
    <property type="evidence" value="ECO:0000318"/>
    <property type="project" value="GO_Central"/>
</dbReference>
<dbReference type="GO" id="GO:0048471">
    <property type="term" value="C:perinuclear region of cytoplasm"/>
    <property type="evidence" value="ECO:0000318"/>
    <property type="project" value="GO_Central"/>
</dbReference>
<dbReference type="GO" id="GO:0005886">
    <property type="term" value="C:plasma membrane"/>
    <property type="evidence" value="ECO:0007669"/>
    <property type="project" value="Ensembl"/>
</dbReference>
<dbReference type="GO" id="GO:0005509">
    <property type="term" value="F:calcium ion binding"/>
    <property type="evidence" value="ECO:0000250"/>
    <property type="project" value="UniProtKB"/>
</dbReference>
<dbReference type="GO" id="GO:0048306">
    <property type="term" value="F:calcium-dependent protein binding"/>
    <property type="evidence" value="ECO:0000318"/>
    <property type="project" value="GO_Central"/>
</dbReference>
<dbReference type="GO" id="GO:0042803">
    <property type="term" value="F:protein homodimerization activity"/>
    <property type="evidence" value="ECO:0007669"/>
    <property type="project" value="Ensembl"/>
</dbReference>
<dbReference type="GO" id="GO:0051592">
    <property type="term" value="P:response to calcium ion"/>
    <property type="evidence" value="ECO:0007669"/>
    <property type="project" value="Ensembl"/>
</dbReference>
<dbReference type="CDD" id="cd05022">
    <property type="entry name" value="S-100A13"/>
    <property type="match status" value="1"/>
</dbReference>
<dbReference type="FunFam" id="1.10.238.10:FF:000192">
    <property type="entry name" value="Protein S100"/>
    <property type="match status" value="1"/>
</dbReference>
<dbReference type="Gene3D" id="1.10.238.10">
    <property type="entry name" value="EF-hand"/>
    <property type="match status" value="1"/>
</dbReference>
<dbReference type="InterPro" id="IPR011992">
    <property type="entry name" value="EF-hand-dom_pair"/>
</dbReference>
<dbReference type="InterPro" id="IPR018247">
    <property type="entry name" value="EF_Hand_1_Ca_BS"/>
</dbReference>
<dbReference type="InterPro" id="IPR002048">
    <property type="entry name" value="EF_hand_dom"/>
</dbReference>
<dbReference type="InterPro" id="IPR001751">
    <property type="entry name" value="S100/CaBP7/8-like_CS"/>
</dbReference>
<dbReference type="InterPro" id="IPR013787">
    <property type="entry name" value="S100_Ca-bd_sub"/>
</dbReference>
<dbReference type="PANTHER" id="PTHR11639:SF76">
    <property type="entry name" value="PROTEIN S100-A16"/>
    <property type="match status" value="1"/>
</dbReference>
<dbReference type="PANTHER" id="PTHR11639">
    <property type="entry name" value="S100 CALCIUM-BINDING PROTEIN"/>
    <property type="match status" value="1"/>
</dbReference>
<dbReference type="Pfam" id="PF01023">
    <property type="entry name" value="S_100"/>
    <property type="match status" value="1"/>
</dbReference>
<dbReference type="SMART" id="SM01394">
    <property type="entry name" value="S_100"/>
    <property type="match status" value="1"/>
</dbReference>
<dbReference type="SUPFAM" id="SSF47473">
    <property type="entry name" value="EF-hand"/>
    <property type="match status" value="1"/>
</dbReference>
<dbReference type="PROSITE" id="PS00018">
    <property type="entry name" value="EF_HAND_1"/>
    <property type="match status" value="1"/>
</dbReference>
<dbReference type="PROSITE" id="PS50222">
    <property type="entry name" value="EF_HAND_2"/>
    <property type="match status" value="1"/>
</dbReference>
<dbReference type="PROSITE" id="PS00303">
    <property type="entry name" value="S100_CABP"/>
    <property type="match status" value="1"/>
</dbReference>
<reference key="1">
    <citation type="submission" date="2006-08" db="EMBL/GenBank/DDBJ databases">
        <authorList>
            <consortium name="NIH - Mammalian Gene Collection (MGC) project"/>
        </authorList>
    </citation>
    <scope>NUCLEOTIDE SEQUENCE [LARGE SCALE MRNA]</scope>
    <source>
        <strain>Hereford</strain>
        <tissue>Fetal pons</tissue>
    </source>
</reference>
<name>S10AG_BOVIN</name>
<feature type="chain" id="PRO_0000273720" description="Protein S100-A16">
    <location>
        <begin position="1"/>
        <end position="103"/>
    </location>
</feature>
<feature type="domain" description="EF-hand 1; degenerate" evidence="1">
    <location>
        <begin position="12"/>
        <end position="47"/>
    </location>
</feature>
<feature type="domain" description="EF-hand 2" evidence="3">
    <location>
        <begin position="54"/>
        <end position="89"/>
    </location>
</feature>
<feature type="binding site" evidence="3">
    <location>
        <position position="67"/>
    </location>
    <ligand>
        <name>Ca(2+)</name>
        <dbReference type="ChEBI" id="CHEBI:29108"/>
    </ligand>
</feature>
<feature type="binding site" evidence="3">
    <location>
        <position position="69"/>
    </location>
    <ligand>
        <name>Ca(2+)</name>
        <dbReference type="ChEBI" id="CHEBI:29108"/>
    </ligand>
</feature>
<feature type="binding site" evidence="3">
    <location>
        <position position="71"/>
    </location>
    <ligand>
        <name>Ca(2+)</name>
        <dbReference type="ChEBI" id="CHEBI:29108"/>
    </ligand>
</feature>
<feature type="binding site" evidence="3">
    <location>
        <position position="73"/>
    </location>
    <ligand>
        <name>Ca(2+)</name>
        <dbReference type="ChEBI" id="CHEBI:29108"/>
    </ligand>
</feature>
<feature type="binding site" evidence="3">
    <location>
        <position position="78"/>
    </location>
    <ligand>
        <name>Ca(2+)</name>
        <dbReference type="ChEBI" id="CHEBI:29108"/>
    </ligand>
</feature>
<sequence>MADSYTELEKAVVVLVENFYKYVSKHSLVKNKISKSSFRKMLQKELNHMLTDTGNRKAADKLIQNLDANHDGRISFDEYWTLIGGITSPIANLIRQQEQQSSS</sequence>
<accession>Q0VCM0</accession>
<organism>
    <name type="scientific">Bos taurus</name>
    <name type="common">Bovine</name>
    <dbReference type="NCBI Taxonomy" id="9913"/>
    <lineage>
        <taxon>Eukaryota</taxon>
        <taxon>Metazoa</taxon>
        <taxon>Chordata</taxon>
        <taxon>Craniata</taxon>
        <taxon>Vertebrata</taxon>
        <taxon>Euteleostomi</taxon>
        <taxon>Mammalia</taxon>
        <taxon>Eutheria</taxon>
        <taxon>Laurasiatheria</taxon>
        <taxon>Artiodactyla</taxon>
        <taxon>Ruminantia</taxon>
        <taxon>Pecora</taxon>
        <taxon>Bovidae</taxon>
        <taxon>Bovinae</taxon>
        <taxon>Bos</taxon>
    </lineage>
</organism>
<keyword id="KW-0106">Calcium</keyword>
<keyword id="KW-0963">Cytoplasm</keyword>
<keyword id="KW-0479">Metal-binding</keyword>
<keyword id="KW-0539">Nucleus</keyword>
<keyword id="KW-1185">Reference proteome</keyword>
<keyword id="KW-0677">Repeat</keyword>
<keyword id="KW-0862">Zinc</keyword>
<proteinExistence type="inferred from homology"/>
<protein>
    <recommendedName>
        <fullName>Protein S100-A16</fullName>
    </recommendedName>
    <alternativeName>
        <fullName>S100 calcium-binding protein A16</fullName>
    </alternativeName>
</protein>
<evidence type="ECO:0000250" key="1">
    <source>
        <dbReference type="UniProtKB" id="Q96FQ6"/>
    </source>
</evidence>
<evidence type="ECO:0000250" key="2">
    <source>
        <dbReference type="UniProtKB" id="Q9D708"/>
    </source>
</evidence>
<evidence type="ECO:0000255" key="3">
    <source>
        <dbReference type="PROSITE-ProRule" id="PRU00448"/>
    </source>
</evidence>
<evidence type="ECO:0000305" key="4"/>
<gene>
    <name type="primary">S100A16</name>
</gene>